<dbReference type="EC" id="3.4.21.-"/>
<dbReference type="SMR" id="P81720"/>
<dbReference type="GO" id="GO:0005576">
    <property type="term" value="C:extracellular region"/>
    <property type="evidence" value="ECO:0007669"/>
    <property type="project" value="UniProtKB-SubCell"/>
</dbReference>
<dbReference type="GO" id="GO:0008236">
    <property type="term" value="F:serine-type peptidase activity"/>
    <property type="evidence" value="ECO:0007669"/>
    <property type="project" value="UniProtKB-KW"/>
</dbReference>
<dbReference type="GO" id="GO:0006508">
    <property type="term" value="P:proteolysis"/>
    <property type="evidence" value="ECO:0007669"/>
    <property type="project" value="UniProtKB-KW"/>
</dbReference>
<protein>
    <recommendedName>
        <fullName>Protease 2 large chain</fullName>
        <ecNumber>3.4.21.-</ecNumber>
    </recommendedName>
    <alternativeName>
        <fullName>APII</fullName>
    </alternativeName>
    <alternativeName>
        <fullName>Protease II large chain</fullName>
    </alternativeName>
</protein>
<proteinExistence type="evidence at protein level"/>
<keyword id="KW-0903">Direct protein sequencing</keyword>
<keyword id="KW-0378">Hydrolase</keyword>
<keyword id="KW-0645">Protease</keyword>
<keyword id="KW-0964">Secreted</keyword>
<keyword id="KW-0720">Serine protease</keyword>
<name>PIIL_ACHLY</name>
<evidence type="ECO:0000256" key="1">
    <source>
        <dbReference type="SAM" id="MobiDB-lite"/>
    </source>
</evidence>
<evidence type="ECO:0000305" key="2"/>
<accession>P81720</accession>
<sequence>NDGNGRDSDPHDPGDWTTAGQCGLWQPARNSQHWTLV</sequence>
<comment type="subunit">
    <text>Heterodimer of a large and a small chain.</text>
</comment>
<comment type="subcellular location">
    <subcellularLocation>
        <location>Secreted</location>
    </subcellularLocation>
</comment>
<comment type="similarity">
    <text evidence="2">Belongs to the peptidase S8 family.</text>
</comment>
<reference key="1">
    <citation type="submission" date="1999-03" db="UniProtKB">
        <authorList>
            <person name="Li S.L."/>
        </authorList>
    </citation>
    <scope>PROTEIN SEQUENCE</scope>
    <source>
        <strain>M497-1</strain>
    </source>
</reference>
<organism>
    <name type="scientific">Achromobacter lyticus</name>
    <dbReference type="NCBI Taxonomy" id="224"/>
    <lineage>
        <taxon>Bacteria</taxon>
        <taxon>Pseudomonadati</taxon>
        <taxon>Pseudomonadota</taxon>
        <taxon>Betaproteobacteria</taxon>
        <taxon>Burkholderiales</taxon>
        <taxon>Alcaligenaceae</taxon>
        <taxon>Achromobacter</taxon>
    </lineage>
</organism>
<feature type="chain" id="PRO_0000076412" description="Protease 2 large chain">
    <location>
        <begin position="1"/>
        <end position="37" status="greater than"/>
    </location>
</feature>
<feature type="region of interest" description="Disordered" evidence="1">
    <location>
        <begin position="1"/>
        <end position="37"/>
    </location>
</feature>
<feature type="compositionally biased region" description="Basic and acidic residues" evidence="1">
    <location>
        <begin position="1"/>
        <end position="14"/>
    </location>
</feature>
<feature type="compositionally biased region" description="Polar residues" evidence="1">
    <location>
        <begin position="28"/>
        <end position="37"/>
    </location>
</feature>
<feature type="non-terminal residue">
    <location>
        <position position="37"/>
    </location>
</feature>